<sequence length="42" mass="4462">MYLAVVPVCCSFPWAGVGLRCSRLSVRVLELSDSVRGGGIHA</sequence>
<name>Y281_TREPA</name>
<keyword id="KW-1185">Reference proteome</keyword>
<feature type="chain" id="PRO_0000202225" description="Uncharacterized protein TP_0281">
    <location>
        <begin position="1"/>
        <end position="42"/>
    </location>
</feature>
<dbReference type="EMBL" id="AE000520">
    <property type="protein sequence ID" value="AAC65278.1"/>
    <property type="molecule type" value="Genomic_DNA"/>
</dbReference>
<dbReference type="PIR" id="D71343">
    <property type="entry name" value="D71343"/>
</dbReference>
<dbReference type="IntAct" id="O83305">
    <property type="interactions" value="64"/>
</dbReference>
<dbReference type="STRING" id="243276.TP_0281"/>
<dbReference type="EnsemblBacteria" id="AAC65278">
    <property type="protein sequence ID" value="AAC65278"/>
    <property type="gene ID" value="TP_0281"/>
</dbReference>
<dbReference type="KEGG" id="tpa:TP_0281"/>
<dbReference type="HOGENOM" id="CLU_3259313_0_0_12"/>
<dbReference type="Proteomes" id="UP000000811">
    <property type="component" value="Chromosome"/>
</dbReference>
<accession>O83305</accession>
<proteinExistence type="predicted"/>
<protein>
    <recommendedName>
        <fullName>Uncharacterized protein TP_0281</fullName>
    </recommendedName>
</protein>
<organism>
    <name type="scientific">Treponema pallidum (strain Nichols)</name>
    <dbReference type="NCBI Taxonomy" id="243276"/>
    <lineage>
        <taxon>Bacteria</taxon>
        <taxon>Pseudomonadati</taxon>
        <taxon>Spirochaetota</taxon>
        <taxon>Spirochaetia</taxon>
        <taxon>Spirochaetales</taxon>
        <taxon>Treponemataceae</taxon>
        <taxon>Treponema</taxon>
    </lineage>
</organism>
<gene>
    <name type="ordered locus">TP_0281</name>
</gene>
<reference key="1">
    <citation type="journal article" date="1998" name="Science">
        <title>Complete genome sequence of Treponema pallidum, the syphilis spirochete.</title>
        <authorList>
            <person name="Fraser C.M."/>
            <person name="Norris S.J."/>
            <person name="Weinstock G.M."/>
            <person name="White O."/>
            <person name="Sutton G.G."/>
            <person name="Dodson R.J."/>
            <person name="Gwinn M.L."/>
            <person name="Hickey E.K."/>
            <person name="Clayton R.A."/>
            <person name="Ketchum K.A."/>
            <person name="Sodergren E."/>
            <person name="Hardham J.M."/>
            <person name="McLeod M.P."/>
            <person name="Salzberg S.L."/>
            <person name="Peterson J.D."/>
            <person name="Khalak H.G."/>
            <person name="Richardson D.L."/>
            <person name="Howell J.K."/>
            <person name="Chidambaram M."/>
            <person name="Utterback T.R."/>
            <person name="McDonald L.A."/>
            <person name="Artiach P."/>
            <person name="Bowman C."/>
            <person name="Cotton M.D."/>
            <person name="Fujii C."/>
            <person name="Garland S.A."/>
            <person name="Hatch B."/>
            <person name="Horst K."/>
            <person name="Roberts K.M."/>
            <person name="Sandusky M."/>
            <person name="Weidman J.F."/>
            <person name="Smith H.O."/>
            <person name="Venter J.C."/>
        </authorList>
    </citation>
    <scope>NUCLEOTIDE SEQUENCE [LARGE SCALE GENOMIC DNA]</scope>
    <source>
        <strain>Nichols</strain>
    </source>
</reference>